<proteinExistence type="inferred from homology"/>
<evidence type="ECO:0000255" key="1">
    <source>
        <dbReference type="PROSITE-ProRule" id="PRU01182"/>
    </source>
</evidence>
<evidence type="ECO:0000305" key="2"/>
<protein>
    <recommendedName>
        <fullName>UPF0758 protein SSU98_1084</fullName>
    </recommendedName>
</protein>
<gene>
    <name type="ordered locus">SSU98_1084</name>
</gene>
<organism>
    <name type="scientific">Streptococcus suis (strain 98HAH33)</name>
    <dbReference type="NCBI Taxonomy" id="391296"/>
    <lineage>
        <taxon>Bacteria</taxon>
        <taxon>Bacillati</taxon>
        <taxon>Bacillota</taxon>
        <taxon>Bacilli</taxon>
        <taxon>Lactobacillales</taxon>
        <taxon>Streptococcaceae</taxon>
        <taxon>Streptococcus</taxon>
    </lineage>
</organism>
<sequence>MYQIEFKEEAFLPRERLVEVGAERLSNQELLAIFIRTGTKKEPVSILSNKLLNRLESLAALRELSIEELQSLTGIGRVKAIEIKAMIELGKRINQSELLLNERILGSEKLGRKMIHEIGHKKQEHLVALYLNTQNQIISQKTIFIGSVNRSIAEPREILHYAVKCMATSIIIVHNHPSGSVQPSRNDLLFTENLKESCEKLGLVLLDHLIVGNKDYYSFREESDVILKFIDNIVEEVFFNLTFTVE</sequence>
<name>Y1084_STRS2</name>
<comment type="similarity">
    <text evidence="2">Belongs to the UPF0758 family.</text>
</comment>
<keyword id="KW-0378">Hydrolase</keyword>
<keyword id="KW-0479">Metal-binding</keyword>
<keyword id="KW-0482">Metalloprotease</keyword>
<keyword id="KW-0645">Protease</keyword>
<keyword id="KW-0862">Zinc</keyword>
<reference key="1">
    <citation type="journal article" date="2007" name="PLoS ONE">
        <title>A glimpse of streptococcal toxic shock syndrome from comparative genomics of S. suis 2 Chinese isolates.</title>
        <authorList>
            <person name="Chen C."/>
            <person name="Tang J."/>
            <person name="Dong W."/>
            <person name="Wang C."/>
            <person name="Feng Y."/>
            <person name="Wang J."/>
            <person name="Zheng F."/>
            <person name="Pan X."/>
            <person name="Liu D."/>
            <person name="Li M."/>
            <person name="Song Y."/>
            <person name="Zhu X."/>
            <person name="Sun H."/>
            <person name="Feng T."/>
            <person name="Guo Z."/>
            <person name="Ju A."/>
            <person name="Ge J."/>
            <person name="Dong Y."/>
            <person name="Sun W."/>
            <person name="Jiang Y."/>
            <person name="Wang J."/>
            <person name="Yan J."/>
            <person name="Yang H."/>
            <person name="Wang X."/>
            <person name="Gao G.F."/>
            <person name="Yang R."/>
            <person name="Wang J."/>
            <person name="Yu J."/>
        </authorList>
    </citation>
    <scope>NUCLEOTIDE SEQUENCE [LARGE SCALE GENOMIC DNA]</scope>
    <source>
        <strain>98HAH33</strain>
    </source>
</reference>
<accession>A4W1K3</accession>
<dbReference type="EMBL" id="CP000408">
    <property type="protein sequence ID" value="ABP92242.1"/>
    <property type="molecule type" value="Genomic_DNA"/>
</dbReference>
<dbReference type="SMR" id="A4W1K3"/>
<dbReference type="KEGG" id="ssv:SSU98_1084"/>
<dbReference type="HOGENOM" id="CLU_073529_0_2_9"/>
<dbReference type="BioCyc" id="SSUI391296:GI2E-1137-MONOMER"/>
<dbReference type="GO" id="GO:0046872">
    <property type="term" value="F:metal ion binding"/>
    <property type="evidence" value="ECO:0007669"/>
    <property type="project" value="UniProtKB-KW"/>
</dbReference>
<dbReference type="GO" id="GO:0008237">
    <property type="term" value="F:metallopeptidase activity"/>
    <property type="evidence" value="ECO:0007669"/>
    <property type="project" value="UniProtKB-KW"/>
</dbReference>
<dbReference type="GO" id="GO:0006508">
    <property type="term" value="P:proteolysis"/>
    <property type="evidence" value="ECO:0007669"/>
    <property type="project" value="UniProtKB-KW"/>
</dbReference>
<dbReference type="CDD" id="cd08071">
    <property type="entry name" value="MPN_DUF2466"/>
    <property type="match status" value="1"/>
</dbReference>
<dbReference type="Gene3D" id="1.10.150.20">
    <property type="entry name" value="5' to 3' exonuclease, C-terminal subdomain"/>
    <property type="match status" value="1"/>
</dbReference>
<dbReference type="Gene3D" id="3.40.140.10">
    <property type="entry name" value="Cytidine Deaminase, domain 2"/>
    <property type="match status" value="1"/>
</dbReference>
<dbReference type="InterPro" id="IPR037518">
    <property type="entry name" value="MPN"/>
</dbReference>
<dbReference type="InterPro" id="IPR025657">
    <property type="entry name" value="RadC_JAB"/>
</dbReference>
<dbReference type="InterPro" id="IPR010994">
    <property type="entry name" value="RuvA_2-like"/>
</dbReference>
<dbReference type="InterPro" id="IPR001405">
    <property type="entry name" value="UPF0758"/>
</dbReference>
<dbReference type="InterPro" id="IPR020891">
    <property type="entry name" value="UPF0758_CS"/>
</dbReference>
<dbReference type="InterPro" id="IPR046778">
    <property type="entry name" value="UPF0758_N"/>
</dbReference>
<dbReference type="NCBIfam" id="NF000642">
    <property type="entry name" value="PRK00024.1"/>
    <property type="match status" value="1"/>
</dbReference>
<dbReference type="NCBIfam" id="TIGR00608">
    <property type="entry name" value="radc"/>
    <property type="match status" value="1"/>
</dbReference>
<dbReference type="PANTHER" id="PTHR30471">
    <property type="entry name" value="DNA REPAIR PROTEIN RADC"/>
    <property type="match status" value="1"/>
</dbReference>
<dbReference type="PANTHER" id="PTHR30471:SF3">
    <property type="entry name" value="UPF0758 PROTEIN YEES-RELATED"/>
    <property type="match status" value="1"/>
</dbReference>
<dbReference type="Pfam" id="PF04002">
    <property type="entry name" value="RadC"/>
    <property type="match status" value="1"/>
</dbReference>
<dbReference type="Pfam" id="PF20582">
    <property type="entry name" value="UPF0758_N"/>
    <property type="match status" value="1"/>
</dbReference>
<dbReference type="SUPFAM" id="SSF47781">
    <property type="entry name" value="RuvA domain 2-like"/>
    <property type="match status" value="1"/>
</dbReference>
<dbReference type="PROSITE" id="PS50249">
    <property type="entry name" value="MPN"/>
    <property type="match status" value="1"/>
</dbReference>
<dbReference type="PROSITE" id="PS01302">
    <property type="entry name" value="UPF0758"/>
    <property type="match status" value="1"/>
</dbReference>
<feature type="chain" id="PRO_1000089866" description="UPF0758 protein SSU98_1084">
    <location>
        <begin position="1"/>
        <end position="246"/>
    </location>
</feature>
<feature type="domain" description="MPN" evidence="1">
    <location>
        <begin position="103"/>
        <end position="225"/>
    </location>
</feature>
<feature type="short sequence motif" description="JAMM motif" evidence="1">
    <location>
        <begin position="174"/>
        <end position="187"/>
    </location>
</feature>
<feature type="binding site" evidence="1">
    <location>
        <position position="174"/>
    </location>
    <ligand>
        <name>Zn(2+)</name>
        <dbReference type="ChEBI" id="CHEBI:29105"/>
        <note>catalytic</note>
    </ligand>
</feature>
<feature type="binding site" evidence="1">
    <location>
        <position position="176"/>
    </location>
    <ligand>
        <name>Zn(2+)</name>
        <dbReference type="ChEBI" id="CHEBI:29105"/>
        <note>catalytic</note>
    </ligand>
</feature>
<feature type="binding site" evidence="1">
    <location>
        <position position="187"/>
    </location>
    <ligand>
        <name>Zn(2+)</name>
        <dbReference type="ChEBI" id="CHEBI:29105"/>
        <note>catalytic</note>
    </ligand>
</feature>